<keyword id="KW-0002">3D-structure</keyword>
<keyword id="KW-0067">ATP-binding</keyword>
<keyword id="KW-0436">Ligase</keyword>
<keyword id="KW-0547">Nucleotide-binding</keyword>
<keyword id="KW-0648">Protein biosynthesis</keyword>
<gene>
    <name evidence="1" type="primary">gatD</name>
    <name type="ordered locus">PYRAB07000</name>
    <name type="ORF">PAB1901</name>
</gene>
<protein>
    <recommendedName>
        <fullName evidence="1">Glutamyl-tRNA(Gln) amidotransferase subunit D</fullName>
        <shortName evidence="1">Glu-ADT subunit D</shortName>
        <ecNumber evidence="1">6.3.5.-</ecNumber>
    </recommendedName>
</protein>
<organism>
    <name type="scientific">Pyrococcus abyssi (strain GE5 / Orsay)</name>
    <dbReference type="NCBI Taxonomy" id="272844"/>
    <lineage>
        <taxon>Archaea</taxon>
        <taxon>Methanobacteriati</taxon>
        <taxon>Methanobacteriota</taxon>
        <taxon>Thermococci</taxon>
        <taxon>Thermococcales</taxon>
        <taxon>Thermococcaceae</taxon>
        <taxon>Pyrococcus</taxon>
    </lineage>
</organism>
<proteinExistence type="evidence at protein level"/>
<accession>Q9V0T9</accession>
<accession>G8ZJG4</accession>
<comment type="function">
    <text evidence="1">Allows the formation of correctly charged Gln-tRNA(Gln) through the transamidation of misacylated Glu-tRNA(Gln) in organisms which lack glutaminyl-tRNA synthetase. The reaction takes place in the presence of glutamine and ATP through an activated gamma-phospho-Glu-tRNA(Gln). The GatDE system is specific for glutamate and does not act on aspartate.</text>
</comment>
<comment type="catalytic activity">
    <reaction evidence="1">
        <text>L-glutamyl-tRNA(Gln) + L-glutamine + ATP + H2O = L-glutaminyl-tRNA(Gln) + L-glutamate + ADP + phosphate + H(+)</text>
        <dbReference type="Rhea" id="RHEA:17521"/>
        <dbReference type="Rhea" id="RHEA-COMP:9681"/>
        <dbReference type="Rhea" id="RHEA-COMP:9684"/>
        <dbReference type="ChEBI" id="CHEBI:15377"/>
        <dbReference type="ChEBI" id="CHEBI:15378"/>
        <dbReference type="ChEBI" id="CHEBI:29985"/>
        <dbReference type="ChEBI" id="CHEBI:30616"/>
        <dbReference type="ChEBI" id="CHEBI:43474"/>
        <dbReference type="ChEBI" id="CHEBI:58359"/>
        <dbReference type="ChEBI" id="CHEBI:78520"/>
        <dbReference type="ChEBI" id="CHEBI:78521"/>
        <dbReference type="ChEBI" id="CHEBI:456216"/>
    </reaction>
</comment>
<comment type="subunit">
    <text evidence="1">Heterodimer of GatD and GatE.</text>
</comment>
<comment type="interaction">
    <interactant intactId="EBI-9023883">
        <id>Q9V0T9</id>
    </interactant>
    <interactant intactId="EBI-9023893">
        <id>Q9V0U0</id>
        <label>gatE</label>
    </interactant>
    <organismsDiffer>false</organismsDiffer>
    <experiments>3</experiments>
</comment>
<comment type="similarity">
    <text evidence="1">Belongs to the asparaginase 1 family. GatD subfamily.</text>
</comment>
<reference key="1">
    <citation type="journal article" date="2003" name="Mol. Microbiol.">
        <title>An integrated analysis of the genome of the hyperthermophilic archaeon Pyrococcus abyssi.</title>
        <authorList>
            <person name="Cohen G.N."/>
            <person name="Barbe V."/>
            <person name="Flament D."/>
            <person name="Galperin M."/>
            <person name="Heilig R."/>
            <person name="Lecompte O."/>
            <person name="Poch O."/>
            <person name="Prieur D."/>
            <person name="Querellou J."/>
            <person name="Ripp R."/>
            <person name="Thierry J.-C."/>
            <person name="Van der Oost J."/>
            <person name="Weissenbach J."/>
            <person name="Zivanovic Y."/>
            <person name="Forterre P."/>
        </authorList>
    </citation>
    <scope>NUCLEOTIDE SEQUENCE [LARGE SCALE GENOMIC DNA]</scope>
    <source>
        <strain>GE5 / Orsay</strain>
    </source>
</reference>
<reference key="2">
    <citation type="journal article" date="2012" name="Curr. Microbiol.">
        <title>Re-annotation of two hyperthermophilic archaea Pyrococcus abyssi GE5 and Pyrococcus furiosus DSM 3638.</title>
        <authorList>
            <person name="Gao J."/>
            <person name="Wang J."/>
        </authorList>
    </citation>
    <scope>GENOME REANNOTATION</scope>
    <source>
        <strain>GE5 / Orsay</strain>
    </source>
</reference>
<feature type="chain" id="PRO_0000140058" description="Glutamyl-tRNA(Gln) amidotransferase subunit D">
    <location>
        <begin position="1"/>
        <end position="438"/>
    </location>
</feature>
<feature type="domain" description="Asparaginase/glutaminase" evidence="2">
    <location>
        <begin position="92"/>
        <end position="422"/>
    </location>
</feature>
<feature type="active site" evidence="1">
    <location>
        <position position="102"/>
    </location>
</feature>
<feature type="active site" evidence="1">
    <location>
        <position position="178"/>
    </location>
</feature>
<feature type="active site" evidence="1">
    <location>
        <position position="179"/>
    </location>
</feature>
<feature type="active site" evidence="1">
    <location>
        <position position="256"/>
    </location>
</feature>
<feature type="helix" evidence="3">
    <location>
        <begin position="3"/>
        <end position="9"/>
    </location>
</feature>
<feature type="strand" evidence="3">
    <location>
        <begin position="17"/>
        <end position="30"/>
    </location>
</feature>
<feature type="strand" evidence="3">
    <location>
        <begin position="33"/>
        <end position="35"/>
    </location>
</feature>
<feature type="strand" evidence="3">
    <location>
        <begin position="45"/>
        <end position="51"/>
    </location>
</feature>
<feature type="strand" evidence="3">
    <location>
        <begin position="56"/>
        <end position="60"/>
    </location>
</feature>
<feature type="helix" evidence="3">
    <location>
        <begin position="61"/>
        <end position="63"/>
    </location>
</feature>
<feature type="strand" evidence="3">
    <location>
        <begin position="64"/>
        <end position="71"/>
    </location>
</feature>
<feature type="strand" evidence="3">
    <location>
        <begin position="93"/>
        <end position="98"/>
    </location>
</feature>
<feature type="strand" evidence="3">
    <location>
        <begin position="105"/>
        <end position="108"/>
    </location>
</feature>
<feature type="turn" evidence="3">
    <location>
        <begin position="109"/>
        <end position="112"/>
    </location>
</feature>
<feature type="strand" evidence="3">
    <location>
        <begin position="113"/>
        <end position="116"/>
    </location>
</feature>
<feature type="helix" evidence="3">
    <location>
        <begin position="120"/>
        <end position="126"/>
    </location>
</feature>
<feature type="helix" evidence="3">
    <location>
        <begin position="128"/>
        <end position="132"/>
    </location>
</feature>
<feature type="strand" evidence="3">
    <location>
        <begin position="134"/>
        <end position="140"/>
    </location>
</feature>
<feature type="helix" evidence="3">
    <location>
        <begin position="146"/>
        <end position="148"/>
    </location>
</feature>
<feature type="helix" evidence="3">
    <location>
        <begin position="151"/>
        <end position="166"/>
    </location>
</feature>
<feature type="strand" evidence="3">
    <location>
        <begin position="170"/>
        <end position="175"/>
    </location>
</feature>
<feature type="strand" evidence="3">
    <location>
        <begin position="178"/>
        <end position="180"/>
    </location>
</feature>
<feature type="helix" evidence="3">
    <location>
        <begin position="181"/>
        <end position="191"/>
    </location>
</feature>
<feature type="strand" evidence="3">
    <location>
        <begin position="192"/>
        <end position="194"/>
    </location>
</feature>
<feature type="strand" evidence="3">
    <location>
        <begin position="199"/>
        <end position="202"/>
    </location>
</feature>
<feature type="helix" evidence="3">
    <location>
        <begin position="215"/>
        <end position="226"/>
    </location>
</feature>
<feature type="strand" evidence="3">
    <location>
        <begin position="228"/>
        <end position="230"/>
    </location>
</feature>
<feature type="strand" evidence="3">
    <location>
        <begin position="232"/>
        <end position="244"/>
    </location>
</feature>
<feature type="strand" evidence="3">
    <location>
        <begin position="246"/>
        <end position="250"/>
    </location>
</feature>
<feature type="strand" evidence="3">
    <location>
        <begin position="253"/>
        <end position="256"/>
    </location>
</feature>
<feature type="strand" evidence="3">
    <location>
        <begin position="258"/>
        <end position="260"/>
    </location>
</feature>
<feature type="strand" evidence="3">
    <location>
        <begin position="265"/>
        <end position="267"/>
    </location>
</feature>
<feature type="strand" evidence="3">
    <location>
        <begin position="273"/>
        <end position="276"/>
    </location>
</feature>
<feature type="strand" evidence="3">
    <location>
        <begin position="282"/>
        <end position="285"/>
    </location>
</feature>
<feature type="strand" evidence="3">
    <location>
        <begin position="307"/>
        <end position="311"/>
    </location>
</feature>
<feature type="helix" evidence="3">
    <location>
        <begin position="319"/>
        <end position="326"/>
    </location>
</feature>
<feature type="strand" evidence="3">
    <location>
        <begin position="330"/>
        <end position="337"/>
    </location>
</feature>
<feature type="turn" evidence="3">
    <location>
        <begin position="338"/>
        <end position="340"/>
    </location>
</feature>
<feature type="helix" evidence="3">
    <location>
        <begin position="344"/>
        <end position="346"/>
    </location>
</feature>
<feature type="helix" evidence="3">
    <location>
        <begin position="347"/>
        <end position="355"/>
    </location>
</feature>
<feature type="strand" evidence="3">
    <location>
        <begin position="359"/>
        <end position="369"/>
    </location>
</feature>
<feature type="strand" evidence="3">
    <location>
        <begin position="374"/>
        <end position="376"/>
    </location>
</feature>
<feature type="helix" evidence="3">
    <location>
        <begin position="377"/>
        <end position="384"/>
    </location>
</feature>
<feature type="helix" evidence="3">
    <location>
        <begin position="395"/>
        <end position="406"/>
    </location>
</feature>
<feature type="helix" evidence="3">
    <location>
        <begin position="412"/>
        <end position="420"/>
    </location>
</feature>
<name>GATD_PYRAB</name>
<evidence type="ECO:0000255" key="1">
    <source>
        <dbReference type="HAMAP-Rule" id="MF_00586"/>
    </source>
</evidence>
<evidence type="ECO:0000255" key="2">
    <source>
        <dbReference type="PROSITE-ProRule" id="PRU01068"/>
    </source>
</evidence>
<evidence type="ECO:0007829" key="3">
    <source>
        <dbReference type="PDB" id="1ZQ1"/>
    </source>
</evidence>
<sequence length="438" mass="48860">MRVDEFLKERNINVGDFVRITKEEDGEEVTYEGYIMPPYELSAGDTLVLKLENGYNIGIALEKIRRIEVLERAKVKPEVHFEALIEGKPGLPEVTIIGTGGTIASRIDYETGAVYPAFTAEELAKAVPEIFEVANVKPKLLFNIFSEDMKPKHWVKIAHEVAKALNSGDYGVVVAHGTDTMGYTAAALSFMLRNLGKPVVLVGAQRSSDRPSSDAAMNLICSVRMATSEVAEVMVVMHGETGDTYCLAHRGTKVRKMHTSRRDAFRSINDVPIAKIWPNGEIEFLRKDYRKRSDEEVEVDDKIEEKVALVKVYPGISSEIIDFLVDKGYKGIVIEGTGLGHTPNDIIPSIERAVEEGVAVCMTSQCIYGRVNLNVYSTGRKLLKAGVIPCEDMLPETAYVKLMWVLGHTQNLEEVRKMMLTNYAGEITPYTRFDTYLR</sequence>
<dbReference type="EC" id="6.3.5.-" evidence="1"/>
<dbReference type="EMBL" id="AJ248285">
    <property type="protein sequence ID" value="CAB49614.1"/>
    <property type="molecule type" value="Genomic_DNA"/>
</dbReference>
<dbReference type="EMBL" id="HE613800">
    <property type="protein sequence ID" value="CCE70091.1"/>
    <property type="molecule type" value="Genomic_DNA"/>
</dbReference>
<dbReference type="PIR" id="E75112">
    <property type="entry name" value="E75112"/>
</dbReference>
<dbReference type="RefSeq" id="WP_010867819.1">
    <property type="nucleotide sequence ID" value="NC_000868.1"/>
</dbReference>
<dbReference type="PDB" id="1ZQ1">
    <property type="method" value="X-ray"/>
    <property type="resolution" value="3.00 A"/>
    <property type="chains" value="A/B=1-438"/>
</dbReference>
<dbReference type="PDBsum" id="1ZQ1"/>
<dbReference type="SMR" id="Q9V0T9"/>
<dbReference type="DIP" id="DIP-48453N"/>
<dbReference type="IntAct" id="Q9V0T9">
    <property type="interactions" value="1"/>
</dbReference>
<dbReference type="STRING" id="272844.PAB1901"/>
<dbReference type="KEGG" id="pab:PAB1901"/>
<dbReference type="PATRIC" id="fig|272844.11.peg.735"/>
<dbReference type="eggNOG" id="arCOG01924">
    <property type="taxonomic scope" value="Archaea"/>
</dbReference>
<dbReference type="HOGENOM" id="CLU_019134_2_1_2"/>
<dbReference type="OrthoDB" id="371959at2157"/>
<dbReference type="PhylomeDB" id="Q9V0T9"/>
<dbReference type="EvolutionaryTrace" id="Q9V0T9"/>
<dbReference type="Proteomes" id="UP000000810">
    <property type="component" value="Chromosome"/>
</dbReference>
<dbReference type="Proteomes" id="UP000009139">
    <property type="component" value="Chromosome"/>
</dbReference>
<dbReference type="GO" id="GO:0004067">
    <property type="term" value="F:asparaginase activity"/>
    <property type="evidence" value="ECO:0007669"/>
    <property type="project" value="InterPro"/>
</dbReference>
<dbReference type="GO" id="GO:0005524">
    <property type="term" value="F:ATP binding"/>
    <property type="evidence" value="ECO:0007669"/>
    <property type="project" value="UniProtKB-KW"/>
</dbReference>
<dbReference type="GO" id="GO:0050567">
    <property type="term" value="F:glutaminyl-tRNA synthase (glutamine-hydrolyzing) activity"/>
    <property type="evidence" value="ECO:0007669"/>
    <property type="project" value="UniProtKB-UniRule"/>
</dbReference>
<dbReference type="GO" id="GO:0006520">
    <property type="term" value="P:amino acid metabolic process"/>
    <property type="evidence" value="ECO:0007669"/>
    <property type="project" value="InterPro"/>
</dbReference>
<dbReference type="GO" id="GO:0006450">
    <property type="term" value="P:regulation of translational fidelity"/>
    <property type="evidence" value="ECO:0007669"/>
    <property type="project" value="InterPro"/>
</dbReference>
<dbReference type="GO" id="GO:0006412">
    <property type="term" value="P:translation"/>
    <property type="evidence" value="ECO:0007669"/>
    <property type="project" value="UniProtKB-UniRule"/>
</dbReference>
<dbReference type="CDD" id="cd08962">
    <property type="entry name" value="GatD"/>
    <property type="match status" value="1"/>
</dbReference>
<dbReference type="FunFam" id="3.40.50.1170:FF:000001">
    <property type="entry name" value="L-asparaginase 2"/>
    <property type="match status" value="1"/>
</dbReference>
<dbReference type="Gene3D" id="2.30.30.520">
    <property type="match status" value="1"/>
</dbReference>
<dbReference type="Gene3D" id="3.40.50.40">
    <property type="match status" value="1"/>
</dbReference>
<dbReference type="Gene3D" id="3.40.50.1170">
    <property type="entry name" value="L-asparaginase, N-terminal domain"/>
    <property type="match status" value="1"/>
</dbReference>
<dbReference type="HAMAP" id="MF_00586">
    <property type="entry name" value="GatD"/>
    <property type="match status" value="1"/>
</dbReference>
<dbReference type="InterPro" id="IPR006033">
    <property type="entry name" value="AsnA_fam"/>
</dbReference>
<dbReference type="InterPro" id="IPR036152">
    <property type="entry name" value="Asp/glu_Ase-like_sf"/>
</dbReference>
<dbReference type="InterPro" id="IPR006034">
    <property type="entry name" value="Asparaginase/glutaminase-like"/>
</dbReference>
<dbReference type="InterPro" id="IPR020827">
    <property type="entry name" value="Asparaginase/glutaminase_AS1"/>
</dbReference>
<dbReference type="InterPro" id="IPR027475">
    <property type="entry name" value="Asparaginase/glutaminase_AS2"/>
</dbReference>
<dbReference type="InterPro" id="IPR040919">
    <property type="entry name" value="Asparaginase_C"/>
</dbReference>
<dbReference type="InterPro" id="IPR011878">
    <property type="entry name" value="GatD"/>
</dbReference>
<dbReference type="InterPro" id="IPR040918">
    <property type="entry name" value="GatD_N"/>
</dbReference>
<dbReference type="InterPro" id="IPR037222">
    <property type="entry name" value="GatD_N_sf"/>
</dbReference>
<dbReference type="InterPro" id="IPR027473">
    <property type="entry name" value="L-asparaginase_C"/>
</dbReference>
<dbReference type="InterPro" id="IPR027474">
    <property type="entry name" value="L-asparaginase_N"/>
</dbReference>
<dbReference type="InterPro" id="IPR037152">
    <property type="entry name" value="L-asparaginase_N_sf"/>
</dbReference>
<dbReference type="NCBIfam" id="TIGR00519">
    <property type="entry name" value="asnASE_I"/>
    <property type="match status" value="1"/>
</dbReference>
<dbReference type="NCBIfam" id="TIGR02153">
    <property type="entry name" value="gatD_arch"/>
    <property type="match status" value="1"/>
</dbReference>
<dbReference type="NCBIfam" id="NF003217">
    <property type="entry name" value="PRK04183.1"/>
    <property type="match status" value="1"/>
</dbReference>
<dbReference type="PANTHER" id="PTHR11707:SF28">
    <property type="entry name" value="60 KDA LYSOPHOSPHOLIPASE"/>
    <property type="match status" value="1"/>
</dbReference>
<dbReference type="PANTHER" id="PTHR11707">
    <property type="entry name" value="L-ASPARAGINASE"/>
    <property type="match status" value="1"/>
</dbReference>
<dbReference type="Pfam" id="PF00710">
    <property type="entry name" value="Asparaginase"/>
    <property type="match status" value="1"/>
</dbReference>
<dbReference type="Pfam" id="PF17763">
    <property type="entry name" value="Asparaginase_C"/>
    <property type="match status" value="1"/>
</dbReference>
<dbReference type="Pfam" id="PF18195">
    <property type="entry name" value="GatD_N"/>
    <property type="match status" value="1"/>
</dbReference>
<dbReference type="PIRSF" id="PIRSF500175">
    <property type="entry name" value="Glu_ADT_D"/>
    <property type="match status" value="1"/>
</dbReference>
<dbReference type="PIRSF" id="PIRSF001220">
    <property type="entry name" value="L-ASNase_gatD"/>
    <property type="match status" value="1"/>
</dbReference>
<dbReference type="PRINTS" id="PR00139">
    <property type="entry name" value="ASNGLNASE"/>
</dbReference>
<dbReference type="SMART" id="SM00870">
    <property type="entry name" value="Asparaginase"/>
    <property type="match status" value="1"/>
</dbReference>
<dbReference type="SUPFAM" id="SSF141300">
    <property type="entry name" value="GatD N-terminal domain-like"/>
    <property type="match status" value="1"/>
</dbReference>
<dbReference type="SUPFAM" id="SSF53774">
    <property type="entry name" value="Glutaminase/Asparaginase"/>
    <property type="match status" value="1"/>
</dbReference>
<dbReference type="PROSITE" id="PS00144">
    <property type="entry name" value="ASN_GLN_ASE_1"/>
    <property type="match status" value="1"/>
</dbReference>
<dbReference type="PROSITE" id="PS00917">
    <property type="entry name" value="ASN_GLN_ASE_2"/>
    <property type="match status" value="1"/>
</dbReference>
<dbReference type="PROSITE" id="PS51732">
    <property type="entry name" value="ASN_GLN_ASE_3"/>
    <property type="match status" value="1"/>
</dbReference>